<gene>
    <name evidence="1" type="primary">rpl14</name>
</gene>
<comment type="function">
    <text evidence="1">Binds to 23S rRNA.</text>
</comment>
<comment type="subunit">
    <text evidence="1">Part of the 50S ribosomal subunit.</text>
</comment>
<comment type="subcellular location">
    <subcellularLocation>
        <location>Plastid</location>
        <location>Chloroplast</location>
    </subcellularLocation>
</comment>
<comment type="similarity">
    <text evidence="1">Belongs to the universal ribosomal protein uL14 family.</text>
</comment>
<proteinExistence type="inferred from homology"/>
<protein>
    <recommendedName>
        <fullName evidence="1">Large ribosomal subunit protein uL14c</fullName>
    </recommendedName>
    <alternativeName>
        <fullName evidence="2">50S ribosomal protein L14, chloroplastic</fullName>
    </alternativeName>
</protein>
<geneLocation type="chloroplast"/>
<organism>
    <name type="scientific">Psilotum nudum</name>
    <name type="common">Whisk fern</name>
    <name type="synonym">Lycopodium nudum</name>
    <dbReference type="NCBI Taxonomy" id="3240"/>
    <lineage>
        <taxon>Eukaryota</taxon>
        <taxon>Viridiplantae</taxon>
        <taxon>Streptophyta</taxon>
        <taxon>Embryophyta</taxon>
        <taxon>Tracheophyta</taxon>
        <taxon>Polypodiopsida</taxon>
        <taxon>Ophioglossidae</taxon>
        <taxon>Psilotales</taxon>
        <taxon>Psilotaceae</taxon>
        <taxon>Psilotum</taxon>
    </lineage>
</organism>
<feature type="chain" id="PRO_0000355903" description="Large ribosomal subunit protein uL14c">
    <location>
        <begin position="1"/>
        <end position="122"/>
    </location>
</feature>
<dbReference type="EMBL" id="AP004638">
    <property type="protein sequence ID" value="BAB84253.1"/>
    <property type="molecule type" value="Genomic_DNA"/>
</dbReference>
<dbReference type="RefSeq" id="NP_569665.1">
    <property type="nucleotide sequence ID" value="NC_003386.1"/>
</dbReference>
<dbReference type="SMR" id="Q8WHY6"/>
<dbReference type="GeneID" id="2545154"/>
<dbReference type="GO" id="GO:0009507">
    <property type="term" value="C:chloroplast"/>
    <property type="evidence" value="ECO:0007669"/>
    <property type="project" value="UniProtKB-SubCell"/>
</dbReference>
<dbReference type="GO" id="GO:0022625">
    <property type="term" value="C:cytosolic large ribosomal subunit"/>
    <property type="evidence" value="ECO:0007669"/>
    <property type="project" value="TreeGrafter"/>
</dbReference>
<dbReference type="GO" id="GO:0070180">
    <property type="term" value="F:large ribosomal subunit rRNA binding"/>
    <property type="evidence" value="ECO:0007669"/>
    <property type="project" value="TreeGrafter"/>
</dbReference>
<dbReference type="GO" id="GO:0003735">
    <property type="term" value="F:structural constituent of ribosome"/>
    <property type="evidence" value="ECO:0007669"/>
    <property type="project" value="InterPro"/>
</dbReference>
<dbReference type="GO" id="GO:0006412">
    <property type="term" value="P:translation"/>
    <property type="evidence" value="ECO:0007669"/>
    <property type="project" value="UniProtKB-UniRule"/>
</dbReference>
<dbReference type="CDD" id="cd00337">
    <property type="entry name" value="Ribosomal_uL14"/>
    <property type="match status" value="1"/>
</dbReference>
<dbReference type="FunFam" id="2.40.150.20:FF:000021">
    <property type="entry name" value="Ribosomal protein L14"/>
    <property type="match status" value="1"/>
</dbReference>
<dbReference type="Gene3D" id="2.40.150.20">
    <property type="entry name" value="Ribosomal protein L14"/>
    <property type="match status" value="1"/>
</dbReference>
<dbReference type="HAMAP" id="MF_01367">
    <property type="entry name" value="Ribosomal_uL14"/>
    <property type="match status" value="1"/>
</dbReference>
<dbReference type="InterPro" id="IPR000218">
    <property type="entry name" value="Ribosomal_uL14"/>
</dbReference>
<dbReference type="InterPro" id="IPR005745">
    <property type="entry name" value="Ribosomal_uL14_bac-type"/>
</dbReference>
<dbReference type="InterPro" id="IPR019972">
    <property type="entry name" value="Ribosomal_uL14_CS"/>
</dbReference>
<dbReference type="InterPro" id="IPR036853">
    <property type="entry name" value="Ribosomal_uL14_sf"/>
</dbReference>
<dbReference type="NCBIfam" id="TIGR01067">
    <property type="entry name" value="rplN_bact"/>
    <property type="match status" value="1"/>
</dbReference>
<dbReference type="PANTHER" id="PTHR11761">
    <property type="entry name" value="50S/60S RIBOSOMAL PROTEIN L14/L23"/>
    <property type="match status" value="1"/>
</dbReference>
<dbReference type="PANTHER" id="PTHR11761:SF3">
    <property type="entry name" value="LARGE RIBOSOMAL SUBUNIT PROTEIN UL14M"/>
    <property type="match status" value="1"/>
</dbReference>
<dbReference type="Pfam" id="PF00238">
    <property type="entry name" value="Ribosomal_L14"/>
    <property type="match status" value="1"/>
</dbReference>
<dbReference type="SMART" id="SM01374">
    <property type="entry name" value="Ribosomal_L14"/>
    <property type="match status" value="1"/>
</dbReference>
<dbReference type="SUPFAM" id="SSF50193">
    <property type="entry name" value="Ribosomal protein L14"/>
    <property type="match status" value="1"/>
</dbReference>
<dbReference type="PROSITE" id="PS00049">
    <property type="entry name" value="RIBOSOMAL_L14"/>
    <property type="match status" value="1"/>
</dbReference>
<evidence type="ECO:0000255" key="1">
    <source>
        <dbReference type="HAMAP-Rule" id="MF_01367"/>
    </source>
</evidence>
<evidence type="ECO:0000305" key="2"/>
<keyword id="KW-0150">Chloroplast</keyword>
<keyword id="KW-0934">Plastid</keyword>
<keyword id="KW-0687">Ribonucleoprotein</keyword>
<keyword id="KW-0689">Ribosomal protein</keyword>
<keyword id="KW-0694">RNA-binding</keyword>
<keyword id="KW-0699">rRNA-binding</keyword>
<accession>Q8WHY6</accession>
<sequence length="122" mass="13725">MIQPQSYLKVTDNSGARKLMCIRILGTNNCKYANTGDTIIAVVKESVPNMPVKKSEIVRAVIVRTRKEMKRDNGIIIRFDDNAAVVINREGNLKGTRVHGPVDRELWKKNFTKIVSLAPEAF</sequence>
<reference key="1">
    <citation type="journal article" date="2004" name="Mol. Biol. Evol.">
        <title>Chloroplast phylogeny indicates that bryophytes are monophyletic.</title>
        <authorList>
            <person name="Nishiyama T."/>
            <person name="Wolf P.G."/>
            <person name="Kugita M."/>
            <person name="Sinclair R.B."/>
            <person name="Sugita M."/>
            <person name="Sugiura C."/>
            <person name="Wakasugi T."/>
            <person name="Yamada K."/>
            <person name="Yoshinaga K."/>
            <person name="Yamaguchi K."/>
            <person name="Ueda K."/>
            <person name="Hasebe M."/>
        </authorList>
    </citation>
    <scope>NUCLEOTIDE SEQUENCE [LARGE SCALE GENOMIC DNA]</scope>
    <source>
        <strain>Kingyoku</strain>
    </source>
</reference>
<name>RK14_PSINU</name>